<comment type="function">
    <text evidence="1">Catalyzes the transfer of an acyl group from acyl-phosphate (acyl-PO(4)) to glycerol-3-phosphate (G3P) to form lysophosphatidic acid (LPA). This enzyme utilizes acyl-phosphate as fatty acyl donor, but not acyl-CoA or acyl-ACP.</text>
</comment>
<comment type="catalytic activity">
    <reaction evidence="1">
        <text>an acyl phosphate + sn-glycerol 3-phosphate = a 1-acyl-sn-glycero-3-phosphate + phosphate</text>
        <dbReference type="Rhea" id="RHEA:34075"/>
        <dbReference type="ChEBI" id="CHEBI:43474"/>
        <dbReference type="ChEBI" id="CHEBI:57597"/>
        <dbReference type="ChEBI" id="CHEBI:57970"/>
        <dbReference type="ChEBI" id="CHEBI:59918"/>
        <dbReference type="EC" id="2.3.1.275"/>
    </reaction>
</comment>
<comment type="pathway">
    <text evidence="1">Lipid metabolism; phospholipid metabolism.</text>
</comment>
<comment type="subunit">
    <text evidence="1">Probably interacts with PlsX.</text>
</comment>
<comment type="subcellular location">
    <subcellularLocation>
        <location evidence="1">Cell inner membrane</location>
        <topology evidence="1">Multi-pass membrane protein</topology>
    </subcellularLocation>
</comment>
<comment type="similarity">
    <text evidence="1">Belongs to the PlsY family.</text>
</comment>
<evidence type="ECO:0000255" key="1">
    <source>
        <dbReference type="HAMAP-Rule" id="MF_01043"/>
    </source>
</evidence>
<protein>
    <recommendedName>
        <fullName evidence="1">Glycerol-3-phosphate acyltransferase</fullName>
    </recommendedName>
    <alternativeName>
        <fullName evidence="1">Acyl-PO4 G3P acyltransferase</fullName>
    </alternativeName>
    <alternativeName>
        <fullName evidence="1">Acyl-phosphate--glycerol-3-phosphate acyltransferase</fullName>
    </alternativeName>
    <alternativeName>
        <fullName evidence="1">G3P acyltransferase</fullName>
        <shortName evidence="1">GPAT</shortName>
        <ecNumber evidence="1">2.3.1.275</ecNumber>
    </alternativeName>
    <alternativeName>
        <fullName evidence="1">Lysophosphatidic acid synthase</fullName>
        <shortName evidence="1">LPA synthase</shortName>
    </alternativeName>
</protein>
<keyword id="KW-0997">Cell inner membrane</keyword>
<keyword id="KW-1003">Cell membrane</keyword>
<keyword id="KW-0444">Lipid biosynthesis</keyword>
<keyword id="KW-0443">Lipid metabolism</keyword>
<keyword id="KW-0472">Membrane</keyword>
<keyword id="KW-0594">Phospholipid biosynthesis</keyword>
<keyword id="KW-1208">Phospholipid metabolism</keyword>
<keyword id="KW-0808">Transferase</keyword>
<keyword id="KW-0812">Transmembrane</keyword>
<keyword id="KW-1133">Transmembrane helix</keyword>
<dbReference type="EC" id="2.3.1.275" evidence="1"/>
<dbReference type="EMBL" id="CP000552">
    <property type="protein sequence ID" value="ABM72695.1"/>
    <property type="molecule type" value="Genomic_DNA"/>
</dbReference>
<dbReference type="RefSeq" id="WP_011820791.1">
    <property type="nucleotide sequence ID" value="NC_008817.1"/>
</dbReference>
<dbReference type="SMR" id="A2BY34"/>
<dbReference type="STRING" id="167542.P9515_14881"/>
<dbReference type="GeneID" id="60200991"/>
<dbReference type="KEGG" id="pmc:P9515_14881"/>
<dbReference type="eggNOG" id="COG0344">
    <property type="taxonomic scope" value="Bacteria"/>
</dbReference>
<dbReference type="HOGENOM" id="CLU_081254_7_1_3"/>
<dbReference type="OrthoDB" id="9777124at2"/>
<dbReference type="UniPathway" id="UPA00085"/>
<dbReference type="Proteomes" id="UP000001589">
    <property type="component" value="Chromosome"/>
</dbReference>
<dbReference type="GO" id="GO:0005886">
    <property type="term" value="C:plasma membrane"/>
    <property type="evidence" value="ECO:0007669"/>
    <property type="project" value="UniProtKB-SubCell"/>
</dbReference>
<dbReference type="GO" id="GO:0043772">
    <property type="term" value="F:acyl-phosphate glycerol-3-phosphate acyltransferase activity"/>
    <property type="evidence" value="ECO:0007669"/>
    <property type="project" value="UniProtKB-UniRule"/>
</dbReference>
<dbReference type="GO" id="GO:0008654">
    <property type="term" value="P:phospholipid biosynthetic process"/>
    <property type="evidence" value="ECO:0007669"/>
    <property type="project" value="UniProtKB-UniRule"/>
</dbReference>
<dbReference type="HAMAP" id="MF_01043">
    <property type="entry name" value="PlsY"/>
    <property type="match status" value="1"/>
</dbReference>
<dbReference type="InterPro" id="IPR003811">
    <property type="entry name" value="G3P_acylTferase_PlsY"/>
</dbReference>
<dbReference type="NCBIfam" id="TIGR00023">
    <property type="entry name" value="glycerol-3-phosphate 1-O-acyltransferase PlsY"/>
    <property type="match status" value="1"/>
</dbReference>
<dbReference type="PANTHER" id="PTHR30309:SF0">
    <property type="entry name" value="GLYCEROL-3-PHOSPHATE ACYLTRANSFERASE-RELATED"/>
    <property type="match status" value="1"/>
</dbReference>
<dbReference type="PANTHER" id="PTHR30309">
    <property type="entry name" value="INNER MEMBRANE PROTEIN YGIH"/>
    <property type="match status" value="1"/>
</dbReference>
<dbReference type="Pfam" id="PF02660">
    <property type="entry name" value="G3P_acyltransf"/>
    <property type="match status" value="1"/>
</dbReference>
<dbReference type="SMART" id="SM01207">
    <property type="entry name" value="G3P_acyltransf"/>
    <property type="match status" value="1"/>
</dbReference>
<feature type="chain" id="PRO_1000064205" description="Glycerol-3-phosphate acyltransferase">
    <location>
        <begin position="1"/>
        <end position="198"/>
    </location>
</feature>
<feature type="transmembrane region" description="Helical" evidence="1">
    <location>
        <begin position="1"/>
        <end position="21"/>
    </location>
</feature>
<feature type="transmembrane region" description="Helical" evidence="1">
    <location>
        <begin position="77"/>
        <end position="97"/>
    </location>
</feature>
<feature type="transmembrane region" description="Helical" evidence="1">
    <location>
        <begin position="111"/>
        <end position="131"/>
    </location>
</feature>
<feature type="transmembrane region" description="Helical" evidence="1">
    <location>
        <begin position="136"/>
        <end position="156"/>
    </location>
</feature>
<feature type="transmembrane region" description="Helical" evidence="1">
    <location>
        <begin position="157"/>
        <end position="177"/>
    </location>
</feature>
<name>PLSY_PROM5</name>
<organism>
    <name type="scientific">Prochlorococcus marinus (strain MIT 9515)</name>
    <dbReference type="NCBI Taxonomy" id="167542"/>
    <lineage>
        <taxon>Bacteria</taxon>
        <taxon>Bacillati</taxon>
        <taxon>Cyanobacteriota</taxon>
        <taxon>Cyanophyceae</taxon>
        <taxon>Synechococcales</taxon>
        <taxon>Prochlorococcaceae</taxon>
        <taxon>Prochlorococcus</taxon>
    </lineage>
</organism>
<gene>
    <name evidence="1" type="primary">plsY</name>
    <name type="ordered locus">P9515_14881</name>
</gene>
<accession>A2BY34</accession>
<reference key="1">
    <citation type="journal article" date="2007" name="PLoS Genet.">
        <title>Patterns and implications of gene gain and loss in the evolution of Prochlorococcus.</title>
        <authorList>
            <person name="Kettler G.C."/>
            <person name="Martiny A.C."/>
            <person name="Huang K."/>
            <person name="Zucker J."/>
            <person name="Coleman M.L."/>
            <person name="Rodrigue S."/>
            <person name="Chen F."/>
            <person name="Lapidus A."/>
            <person name="Ferriera S."/>
            <person name="Johnson J."/>
            <person name="Steglich C."/>
            <person name="Church G.M."/>
            <person name="Richardson P."/>
            <person name="Chisholm S.W."/>
        </authorList>
    </citation>
    <scope>NUCLEOTIDE SEQUENCE [LARGE SCALE GENOMIC DNA]</scope>
    <source>
        <strain>MIT 9515</strain>
    </source>
</reference>
<proteinExistence type="inferred from homology"/>
<sequence length="198" mass="21624">MTIIIIVLSYFLGSIPTGFLFGKFLKNIDLRLIGSGSTGATNVLRNVGKWPAFFVFIIDVGKGLLAVKLSQSYTNQHLFEVLAGISAVSGHIWPIWLKGKGGKAVATGLGMFIALSWKVGFASLGIFLIILSKSKIVSLSSILAAFFLPLFMFLDIGVTNHPYFLISLVVSILVILKHRTNIRRLIKGEESKINSLNK</sequence>